<sequence>MQTLVNKIWYQGHPLQWLLLPLSFVFGFITFVRRGLFQLGLKAQTILPVPVIVVGNITVGGSGKTPMVIYLIELLRAHGFNPGVISRGYGANIDGVKQVAYNASATDVGDEPAMIVARSGVPMVVGSKRVEAANVLIAEHGVDVIICDDGLQHYALGRDIELVVIDGQRRLGNEYLLPAGPLREGPWRLKDVDFVVINGGNADVGQFEMQLAPTQVKAVDGNIITTDFDKSQPLVAMAGIGNPTRFFDSLQAQGYQVVLSHGFDDHQAYDKKQLCDLAKDLPLMMTEKDAVKCRDFAQENWWYLAVNAKLSPQFDEQLLSRLHEVVAAKQGNSHGIR</sequence>
<protein>
    <recommendedName>
        <fullName evidence="1">Tetraacyldisaccharide 4'-kinase</fullName>
        <ecNumber evidence="1">2.7.1.130</ecNumber>
    </recommendedName>
    <alternativeName>
        <fullName evidence="1">Lipid A 4'-kinase</fullName>
    </alternativeName>
</protein>
<accession>A1RL20</accession>
<dbReference type="EC" id="2.7.1.130" evidence="1"/>
<dbReference type="EMBL" id="CP000503">
    <property type="protein sequence ID" value="ABM25365.1"/>
    <property type="molecule type" value="Genomic_DNA"/>
</dbReference>
<dbReference type="RefSeq" id="WP_011789825.1">
    <property type="nucleotide sequence ID" value="NC_008750.1"/>
</dbReference>
<dbReference type="SMR" id="A1RL20"/>
<dbReference type="KEGG" id="shw:Sputw3181_2541"/>
<dbReference type="HOGENOM" id="CLU_038816_2_0_6"/>
<dbReference type="UniPathway" id="UPA00359">
    <property type="reaction ID" value="UER00482"/>
</dbReference>
<dbReference type="Proteomes" id="UP000002597">
    <property type="component" value="Chromosome"/>
</dbReference>
<dbReference type="GO" id="GO:0005886">
    <property type="term" value="C:plasma membrane"/>
    <property type="evidence" value="ECO:0007669"/>
    <property type="project" value="TreeGrafter"/>
</dbReference>
<dbReference type="GO" id="GO:0005524">
    <property type="term" value="F:ATP binding"/>
    <property type="evidence" value="ECO:0007669"/>
    <property type="project" value="UniProtKB-UniRule"/>
</dbReference>
<dbReference type="GO" id="GO:0009029">
    <property type="term" value="F:tetraacyldisaccharide 4'-kinase activity"/>
    <property type="evidence" value="ECO:0007669"/>
    <property type="project" value="UniProtKB-UniRule"/>
</dbReference>
<dbReference type="GO" id="GO:0009245">
    <property type="term" value="P:lipid A biosynthetic process"/>
    <property type="evidence" value="ECO:0007669"/>
    <property type="project" value="UniProtKB-UniRule"/>
</dbReference>
<dbReference type="GO" id="GO:0009244">
    <property type="term" value="P:lipopolysaccharide core region biosynthetic process"/>
    <property type="evidence" value="ECO:0007669"/>
    <property type="project" value="TreeGrafter"/>
</dbReference>
<dbReference type="HAMAP" id="MF_00409">
    <property type="entry name" value="LpxK"/>
    <property type="match status" value="1"/>
</dbReference>
<dbReference type="InterPro" id="IPR003758">
    <property type="entry name" value="LpxK"/>
</dbReference>
<dbReference type="InterPro" id="IPR027417">
    <property type="entry name" value="P-loop_NTPase"/>
</dbReference>
<dbReference type="NCBIfam" id="TIGR00682">
    <property type="entry name" value="lpxK"/>
    <property type="match status" value="1"/>
</dbReference>
<dbReference type="PANTHER" id="PTHR42724">
    <property type="entry name" value="TETRAACYLDISACCHARIDE 4'-KINASE"/>
    <property type="match status" value="1"/>
</dbReference>
<dbReference type="PANTHER" id="PTHR42724:SF1">
    <property type="entry name" value="TETRAACYLDISACCHARIDE 4'-KINASE, MITOCHONDRIAL-RELATED"/>
    <property type="match status" value="1"/>
</dbReference>
<dbReference type="Pfam" id="PF02606">
    <property type="entry name" value="LpxK"/>
    <property type="match status" value="1"/>
</dbReference>
<dbReference type="SUPFAM" id="SSF52540">
    <property type="entry name" value="P-loop containing nucleoside triphosphate hydrolases"/>
    <property type="match status" value="1"/>
</dbReference>
<feature type="chain" id="PRO_0000291248" description="Tetraacyldisaccharide 4'-kinase">
    <location>
        <begin position="1"/>
        <end position="337"/>
    </location>
</feature>
<feature type="binding site" evidence="1">
    <location>
        <begin position="58"/>
        <end position="65"/>
    </location>
    <ligand>
        <name>ATP</name>
        <dbReference type="ChEBI" id="CHEBI:30616"/>
    </ligand>
</feature>
<name>LPXK_SHESW</name>
<organism>
    <name type="scientific">Shewanella sp. (strain W3-18-1)</name>
    <dbReference type="NCBI Taxonomy" id="351745"/>
    <lineage>
        <taxon>Bacteria</taxon>
        <taxon>Pseudomonadati</taxon>
        <taxon>Pseudomonadota</taxon>
        <taxon>Gammaproteobacteria</taxon>
        <taxon>Alteromonadales</taxon>
        <taxon>Shewanellaceae</taxon>
        <taxon>Shewanella</taxon>
    </lineage>
</organism>
<evidence type="ECO:0000255" key="1">
    <source>
        <dbReference type="HAMAP-Rule" id="MF_00409"/>
    </source>
</evidence>
<reference key="1">
    <citation type="submission" date="2006-12" db="EMBL/GenBank/DDBJ databases">
        <title>Complete sequence of Shewanella sp. W3-18-1.</title>
        <authorList>
            <consortium name="US DOE Joint Genome Institute"/>
            <person name="Copeland A."/>
            <person name="Lucas S."/>
            <person name="Lapidus A."/>
            <person name="Barry K."/>
            <person name="Detter J.C."/>
            <person name="Glavina del Rio T."/>
            <person name="Hammon N."/>
            <person name="Israni S."/>
            <person name="Dalin E."/>
            <person name="Tice H."/>
            <person name="Pitluck S."/>
            <person name="Chain P."/>
            <person name="Malfatti S."/>
            <person name="Shin M."/>
            <person name="Vergez L."/>
            <person name="Schmutz J."/>
            <person name="Larimer F."/>
            <person name="Land M."/>
            <person name="Hauser L."/>
            <person name="Kyrpides N."/>
            <person name="Lykidis A."/>
            <person name="Tiedje J."/>
            <person name="Richardson P."/>
        </authorList>
    </citation>
    <scope>NUCLEOTIDE SEQUENCE [LARGE SCALE GENOMIC DNA]</scope>
    <source>
        <strain>W3-18-1</strain>
    </source>
</reference>
<keyword id="KW-0067">ATP-binding</keyword>
<keyword id="KW-0418">Kinase</keyword>
<keyword id="KW-0441">Lipid A biosynthesis</keyword>
<keyword id="KW-0444">Lipid biosynthesis</keyword>
<keyword id="KW-0443">Lipid metabolism</keyword>
<keyword id="KW-0547">Nucleotide-binding</keyword>
<keyword id="KW-0808">Transferase</keyword>
<gene>
    <name evidence="1" type="primary">lpxK</name>
    <name type="ordered locus">Sputw3181_2541</name>
</gene>
<proteinExistence type="inferred from homology"/>
<comment type="function">
    <text evidence="1">Transfers the gamma-phosphate of ATP to the 4'-position of a tetraacyldisaccharide 1-phosphate intermediate (termed DS-1-P) to form tetraacyldisaccharide 1,4'-bis-phosphate (lipid IVA).</text>
</comment>
<comment type="catalytic activity">
    <reaction evidence="1">
        <text>a lipid A disaccharide + ATP = a lipid IVA + ADP + H(+)</text>
        <dbReference type="Rhea" id="RHEA:67840"/>
        <dbReference type="ChEBI" id="CHEBI:15378"/>
        <dbReference type="ChEBI" id="CHEBI:30616"/>
        <dbReference type="ChEBI" id="CHEBI:176343"/>
        <dbReference type="ChEBI" id="CHEBI:176425"/>
        <dbReference type="ChEBI" id="CHEBI:456216"/>
        <dbReference type="EC" id="2.7.1.130"/>
    </reaction>
</comment>
<comment type="pathway">
    <text evidence="1">Glycolipid biosynthesis; lipid IV(A) biosynthesis; lipid IV(A) from (3R)-3-hydroxytetradecanoyl-[acyl-carrier-protein] and UDP-N-acetyl-alpha-D-glucosamine: step 6/6.</text>
</comment>
<comment type="similarity">
    <text evidence="1">Belongs to the LpxK family.</text>
</comment>